<protein>
    <recommendedName>
        <fullName evidence="1">Putative transport protein APJL_0985</fullName>
    </recommendedName>
</protein>
<feature type="chain" id="PRO_1000135203" description="Putative transport protein APJL_0985">
    <location>
        <begin position="1"/>
        <end position="552"/>
    </location>
</feature>
<feature type="transmembrane region" description="Helical" evidence="1">
    <location>
        <begin position="4"/>
        <end position="24"/>
    </location>
</feature>
<feature type="transmembrane region" description="Helical" evidence="1">
    <location>
        <begin position="29"/>
        <end position="49"/>
    </location>
</feature>
<feature type="transmembrane region" description="Helical" evidence="1">
    <location>
        <begin position="65"/>
        <end position="85"/>
    </location>
</feature>
<feature type="transmembrane region" description="Helical" evidence="1">
    <location>
        <begin position="95"/>
        <end position="115"/>
    </location>
</feature>
<feature type="transmembrane region" description="Helical" evidence="1">
    <location>
        <begin position="161"/>
        <end position="181"/>
    </location>
</feature>
<feature type="transmembrane region" description="Helical" evidence="1">
    <location>
        <begin position="370"/>
        <end position="390"/>
    </location>
</feature>
<feature type="transmembrane region" description="Helical" evidence="1">
    <location>
        <begin position="403"/>
        <end position="425"/>
    </location>
</feature>
<feature type="transmembrane region" description="Helical" evidence="1">
    <location>
        <begin position="438"/>
        <end position="458"/>
    </location>
</feature>
<feature type="transmembrane region" description="Helical" evidence="1">
    <location>
        <begin position="463"/>
        <end position="483"/>
    </location>
</feature>
<feature type="transmembrane region" description="Helical" evidence="1">
    <location>
        <begin position="492"/>
        <end position="512"/>
    </location>
</feature>
<feature type="transmembrane region" description="Helical" evidence="1">
    <location>
        <begin position="529"/>
        <end position="549"/>
    </location>
</feature>
<feature type="domain" description="RCK C-terminal 1" evidence="1">
    <location>
        <begin position="190"/>
        <end position="275"/>
    </location>
</feature>
<feature type="domain" description="RCK C-terminal 2" evidence="1">
    <location>
        <begin position="277"/>
        <end position="360"/>
    </location>
</feature>
<organism>
    <name type="scientific">Actinobacillus pleuropneumoniae serotype 3 (strain JL03)</name>
    <dbReference type="NCBI Taxonomy" id="434271"/>
    <lineage>
        <taxon>Bacteria</taxon>
        <taxon>Pseudomonadati</taxon>
        <taxon>Pseudomonadota</taxon>
        <taxon>Gammaproteobacteria</taxon>
        <taxon>Pasteurellales</taxon>
        <taxon>Pasteurellaceae</taxon>
        <taxon>Actinobacillus</taxon>
    </lineage>
</organism>
<dbReference type="EMBL" id="CP000687">
    <property type="protein sequence ID" value="ABY69543.1"/>
    <property type="molecule type" value="Genomic_DNA"/>
</dbReference>
<dbReference type="RefSeq" id="WP_005620619.1">
    <property type="nucleotide sequence ID" value="NC_010278.1"/>
</dbReference>
<dbReference type="SMR" id="B0BPQ8"/>
<dbReference type="KEGG" id="apj:APJL_0985"/>
<dbReference type="HOGENOM" id="CLU_035023_3_1_6"/>
<dbReference type="Proteomes" id="UP000008547">
    <property type="component" value="Chromosome"/>
</dbReference>
<dbReference type="GO" id="GO:0005886">
    <property type="term" value="C:plasma membrane"/>
    <property type="evidence" value="ECO:0007669"/>
    <property type="project" value="UniProtKB-SubCell"/>
</dbReference>
<dbReference type="GO" id="GO:0008324">
    <property type="term" value="F:monoatomic cation transmembrane transporter activity"/>
    <property type="evidence" value="ECO:0007669"/>
    <property type="project" value="InterPro"/>
</dbReference>
<dbReference type="GO" id="GO:0006813">
    <property type="term" value="P:potassium ion transport"/>
    <property type="evidence" value="ECO:0007669"/>
    <property type="project" value="InterPro"/>
</dbReference>
<dbReference type="Gene3D" id="3.30.70.1450">
    <property type="entry name" value="Regulator of K+ conductance, C-terminal domain"/>
    <property type="match status" value="2"/>
</dbReference>
<dbReference type="HAMAP" id="MF_01016">
    <property type="entry name" value="YidE"/>
    <property type="match status" value="1"/>
</dbReference>
<dbReference type="InterPro" id="IPR050144">
    <property type="entry name" value="AAE_transporter"/>
</dbReference>
<dbReference type="InterPro" id="IPR006037">
    <property type="entry name" value="RCK_C"/>
</dbReference>
<dbReference type="InterPro" id="IPR036721">
    <property type="entry name" value="RCK_C_sf"/>
</dbReference>
<dbReference type="InterPro" id="IPR023018">
    <property type="entry name" value="Transpt_YidE_put"/>
</dbReference>
<dbReference type="InterPro" id="IPR006512">
    <property type="entry name" value="YidE_YbjL"/>
</dbReference>
<dbReference type="NCBIfam" id="NF003007">
    <property type="entry name" value="PRK03818.1"/>
    <property type="match status" value="1"/>
</dbReference>
<dbReference type="NCBIfam" id="TIGR01625">
    <property type="entry name" value="YidE_YbjL_dupl"/>
    <property type="match status" value="2"/>
</dbReference>
<dbReference type="PANTHER" id="PTHR30445">
    <property type="entry name" value="K(+)_H(+) ANTIPORTER SUBUNIT KHTT"/>
    <property type="match status" value="1"/>
</dbReference>
<dbReference type="PANTHER" id="PTHR30445:SF3">
    <property type="entry name" value="TRANSPORT PROTEIN YIDE-RELATED"/>
    <property type="match status" value="1"/>
</dbReference>
<dbReference type="Pfam" id="PF06826">
    <property type="entry name" value="Asp-Al_Ex"/>
    <property type="match status" value="2"/>
</dbReference>
<dbReference type="Pfam" id="PF02080">
    <property type="entry name" value="TrkA_C"/>
    <property type="match status" value="2"/>
</dbReference>
<dbReference type="SUPFAM" id="SSF116726">
    <property type="entry name" value="TrkA C-terminal domain-like"/>
    <property type="match status" value="2"/>
</dbReference>
<dbReference type="PROSITE" id="PS51202">
    <property type="entry name" value="RCK_C"/>
    <property type="match status" value="2"/>
</dbReference>
<name>Y985_ACTPJ</name>
<comment type="subcellular location">
    <subcellularLocation>
        <location evidence="1">Cell membrane</location>
        <topology evidence="1">Multi-pass membrane protein</topology>
    </subcellularLocation>
</comment>
<comment type="similarity">
    <text evidence="1">Belongs to the AAE transporter (TC 2.A.81) family. YidE subfamily.</text>
</comment>
<keyword id="KW-1003">Cell membrane</keyword>
<keyword id="KW-0472">Membrane</keyword>
<keyword id="KW-0677">Repeat</keyword>
<keyword id="KW-0812">Transmembrane</keyword>
<keyword id="KW-1133">Transmembrane helix</keyword>
<keyword id="KW-0813">Transport</keyword>
<accession>B0BPQ8</accession>
<reference key="1">
    <citation type="journal article" date="2008" name="PLoS ONE">
        <title>Genome biology of Actinobacillus pleuropneumoniae JL03, an isolate of serotype 3 prevalent in China.</title>
        <authorList>
            <person name="Xu Z."/>
            <person name="Zhou Y."/>
            <person name="Li L."/>
            <person name="Zhou R."/>
            <person name="Xiao S."/>
            <person name="Wan Y."/>
            <person name="Zhang S."/>
            <person name="Wang K."/>
            <person name="Li W."/>
            <person name="Li L."/>
            <person name="Jin H."/>
            <person name="Kang M."/>
            <person name="Dalai B."/>
            <person name="Li T."/>
            <person name="Liu L."/>
            <person name="Cheng Y."/>
            <person name="Zhang L."/>
            <person name="Xu T."/>
            <person name="Zheng H."/>
            <person name="Pu S."/>
            <person name="Wang B."/>
            <person name="Gu W."/>
            <person name="Zhang X.L."/>
            <person name="Zhu G.-F."/>
            <person name="Wang S."/>
            <person name="Zhao G.-P."/>
            <person name="Chen H."/>
        </authorList>
    </citation>
    <scope>NUCLEOTIDE SEQUENCE [LARGE SCALE GENOMIC DNA]</scope>
    <source>
        <strain>JL03</strain>
    </source>
</reference>
<gene>
    <name type="ordered locus">APJL_0985</name>
</gene>
<sequence length="552" mass="59402">MSDIAIIVSLLSLVAVLGLWIGHIKIKGVGLGIGGVLFGGIIISHCTHLYGIELDAHTLHFIQEFGLILFVYSIGIQVGPGFFASLRQSGLKLNGFAVMIVGLSGILVALIHKLFDVPLPVILGIFSGAVTNTPSLGAGQQVLTELGGDNITAVMGMSYAIAYPFGIIGILLSMWLIRIIFKVNIDKEAQEFDNNQNQQKEGLDTLNVRLTNPNLGGLKLKEIPDFESHTVIYSRLKRNDQLIVPNVDTVLNVGDVLHLVGEKATLHKMQLILGEEADVSVSTRGTIFRSERAVVTNENVFGKKIRHLMLKGKYEVVISRLNRAGVELIPNGEMALQFGDVLNLVGRQEDIETVRAIIGDAHQKLQQVQMLPIFLGIGLGVLLGSLPLYLPGFPVALKLGLAGGPLVVALILARIGSIGKLYWFMPPSANLALREIGIVLFLSVVGLKAGANFLDTLLSPEGLAWMGYGAIITFIPLIVTGFVARIYGKMNYLSLCGLLSGAMTDPPALAFANEIKDGHGAAALSYATVYPLVMFLRIILPQLLAILLWTAS</sequence>
<proteinExistence type="inferred from homology"/>
<evidence type="ECO:0000255" key="1">
    <source>
        <dbReference type="HAMAP-Rule" id="MF_01016"/>
    </source>
</evidence>